<comment type="function">
    <text evidence="1">May act as a substrate-specific adapter of an E3 ubiquitin-protein ligase complex (CUL3-RBX1-BTB) which mediates the ubiquitination and subsequent proteasomal degradation of target proteins.</text>
</comment>
<comment type="pathway">
    <text>Protein modification; protein ubiquitination.</text>
</comment>
<comment type="domain">
    <text evidence="3">The BTB/POZ domain mediates the interaction with some component of ubiquitin ligase complexes.</text>
</comment>
<sequence>MGISKDRIKFNVGGRLFETTATTLANAGRDSFFGALFDDEWNLSPLEDSILFVDRNSDCFAVLLDLLRTGDLNVPANIPERLLHREASFYGLLDHVRTAKWGPFDGNRLRLSDSVKGIAPGDGTAIRAGPDGGCCVAHGSVVHVFDWMLEEHSPINLDYQRVNDVGWIDSDNIVLSACEKLGRGDGGMGLFSSSSGDLRYKFQVCHENQVKSYTAGALSFSPDYEIFASCKGRSNEYGIGVWDQITGKQTDFFYESPGWSLGDADKLQWLNGKNCLLVATLFPRKDNCYISLLDFRDKNMVWSWSDIGSPMAIDEKRVRDAIAMEDSNSICVVNEFEDLGFIDLRMYGGSVRWSSRSKLMKSKMPDEPCYPKLALHEGQLFSSMNDSISVFCGPDWVLTSRLRRSYGGSICDFSIGGDRLFALHSEENVFDVWETPPCPII</sequence>
<dbReference type="EMBL" id="AC005967">
    <property type="protein sequence ID" value="AAD03385.1"/>
    <property type="molecule type" value="Genomic_DNA"/>
</dbReference>
<dbReference type="EMBL" id="CP002685">
    <property type="protein sequence ID" value="AEC07547.1"/>
    <property type="molecule type" value="Genomic_DNA"/>
</dbReference>
<dbReference type="EMBL" id="BT020254">
    <property type="protein sequence ID" value="AAV84475.1"/>
    <property type="molecule type" value="mRNA"/>
</dbReference>
<dbReference type="EMBL" id="BT020435">
    <property type="protein sequence ID" value="AAW30014.1"/>
    <property type="molecule type" value="mRNA"/>
</dbReference>
<dbReference type="EMBL" id="AK229200">
    <property type="protein sequence ID" value="BAF01070.1"/>
    <property type="molecule type" value="mRNA"/>
</dbReference>
<dbReference type="PIR" id="C84634">
    <property type="entry name" value="C84634"/>
</dbReference>
<dbReference type="RefSeq" id="NP_180001.1">
    <property type="nucleotide sequence ID" value="NM_127985.4"/>
</dbReference>
<dbReference type="FunCoup" id="Q9ZUH1">
    <property type="interactions" value="227"/>
</dbReference>
<dbReference type="STRING" id="3702.Q9ZUH1"/>
<dbReference type="PaxDb" id="3702-AT2G24240.1"/>
<dbReference type="ProteomicsDB" id="242844"/>
<dbReference type="EnsemblPlants" id="AT2G24240.1">
    <property type="protein sequence ID" value="AT2G24240.1"/>
    <property type="gene ID" value="AT2G24240"/>
</dbReference>
<dbReference type="GeneID" id="816958"/>
<dbReference type="Gramene" id="AT2G24240.1">
    <property type="protein sequence ID" value="AT2G24240.1"/>
    <property type="gene ID" value="AT2G24240"/>
</dbReference>
<dbReference type="KEGG" id="ath:AT2G24240"/>
<dbReference type="Araport" id="AT2G24240"/>
<dbReference type="TAIR" id="AT2G24240"/>
<dbReference type="eggNOG" id="KOG2714">
    <property type="taxonomic scope" value="Eukaryota"/>
</dbReference>
<dbReference type="HOGENOM" id="CLU_045194_1_0_1"/>
<dbReference type="InParanoid" id="Q9ZUH1"/>
<dbReference type="OMA" id="RFRVAHG"/>
<dbReference type="OrthoDB" id="2414723at2759"/>
<dbReference type="PhylomeDB" id="Q9ZUH1"/>
<dbReference type="UniPathway" id="UPA00143"/>
<dbReference type="PRO" id="PR:Q9ZUH1"/>
<dbReference type="Proteomes" id="UP000006548">
    <property type="component" value="Chromosome 2"/>
</dbReference>
<dbReference type="ExpressionAtlas" id="Q9ZUH1">
    <property type="expression patterns" value="baseline and differential"/>
</dbReference>
<dbReference type="GO" id="GO:0051260">
    <property type="term" value="P:protein homooligomerization"/>
    <property type="evidence" value="ECO:0007669"/>
    <property type="project" value="InterPro"/>
</dbReference>
<dbReference type="GO" id="GO:0016567">
    <property type="term" value="P:protein ubiquitination"/>
    <property type="evidence" value="ECO:0007669"/>
    <property type="project" value="UniProtKB-UniPathway"/>
</dbReference>
<dbReference type="CDD" id="cd18316">
    <property type="entry name" value="BTB_POZ_KCTD-like"/>
    <property type="match status" value="1"/>
</dbReference>
<dbReference type="Gene3D" id="3.30.710.10">
    <property type="entry name" value="Potassium Channel Kv1.1, Chain A"/>
    <property type="match status" value="1"/>
</dbReference>
<dbReference type="Gene3D" id="2.130.10.10">
    <property type="entry name" value="YVTN repeat-like/Quinoprotein amine dehydrogenase"/>
    <property type="match status" value="1"/>
</dbReference>
<dbReference type="InterPro" id="IPR000210">
    <property type="entry name" value="BTB/POZ_dom"/>
</dbReference>
<dbReference type="InterPro" id="IPR011333">
    <property type="entry name" value="SKP1/BTB/POZ_sf"/>
</dbReference>
<dbReference type="InterPro" id="IPR003131">
    <property type="entry name" value="T1-type_BTB"/>
</dbReference>
<dbReference type="InterPro" id="IPR015943">
    <property type="entry name" value="WD40/YVTN_repeat-like_dom_sf"/>
</dbReference>
<dbReference type="InterPro" id="IPR036322">
    <property type="entry name" value="WD40_repeat_dom_sf"/>
</dbReference>
<dbReference type="PANTHER" id="PTHR14499:SF116">
    <property type="entry name" value="OSJNBA0029H02.24 PROTEIN"/>
    <property type="match status" value="1"/>
</dbReference>
<dbReference type="PANTHER" id="PTHR14499">
    <property type="entry name" value="POTASSIUM CHANNEL TETRAMERIZATION DOMAIN-CONTAINING"/>
    <property type="match status" value="1"/>
</dbReference>
<dbReference type="Pfam" id="PF25279">
    <property type="entry name" value="Beta_prop_At2g24240"/>
    <property type="match status" value="1"/>
</dbReference>
<dbReference type="Pfam" id="PF02214">
    <property type="entry name" value="BTB_2"/>
    <property type="match status" value="1"/>
</dbReference>
<dbReference type="SMART" id="SM00225">
    <property type="entry name" value="BTB"/>
    <property type="match status" value="1"/>
</dbReference>
<dbReference type="SUPFAM" id="SSF54695">
    <property type="entry name" value="POZ domain"/>
    <property type="match status" value="1"/>
</dbReference>
<dbReference type="SUPFAM" id="SSF50978">
    <property type="entry name" value="WD40 repeat-like"/>
    <property type="match status" value="1"/>
</dbReference>
<dbReference type="PROSITE" id="PS50097">
    <property type="entry name" value="BTB"/>
    <property type="match status" value="1"/>
</dbReference>
<evidence type="ECO:0000250" key="1"/>
<evidence type="ECO:0000255" key="2">
    <source>
        <dbReference type="PROSITE-ProRule" id="PRU00037"/>
    </source>
</evidence>
<evidence type="ECO:0000269" key="3">
    <source>
    </source>
</evidence>
<name>Y2424_ARATH</name>
<proteinExistence type="evidence at transcript level"/>
<feature type="chain" id="PRO_0000405329" description="BTB/POZ domain-containing protein At2g24240">
    <location>
        <begin position="1"/>
        <end position="441"/>
    </location>
</feature>
<feature type="domain" description="BTB" evidence="2">
    <location>
        <begin position="6"/>
        <end position="76"/>
    </location>
</feature>
<keyword id="KW-1185">Reference proteome</keyword>
<keyword id="KW-0833">Ubl conjugation pathway</keyword>
<organism>
    <name type="scientific">Arabidopsis thaliana</name>
    <name type="common">Mouse-ear cress</name>
    <dbReference type="NCBI Taxonomy" id="3702"/>
    <lineage>
        <taxon>Eukaryota</taxon>
        <taxon>Viridiplantae</taxon>
        <taxon>Streptophyta</taxon>
        <taxon>Embryophyta</taxon>
        <taxon>Tracheophyta</taxon>
        <taxon>Spermatophyta</taxon>
        <taxon>Magnoliopsida</taxon>
        <taxon>eudicotyledons</taxon>
        <taxon>Gunneridae</taxon>
        <taxon>Pentapetalae</taxon>
        <taxon>rosids</taxon>
        <taxon>malvids</taxon>
        <taxon>Brassicales</taxon>
        <taxon>Brassicaceae</taxon>
        <taxon>Camelineae</taxon>
        <taxon>Arabidopsis</taxon>
    </lineage>
</organism>
<gene>
    <name type="ordered locus">At2g24240</name>
    <name type="ORF">F27D4.15</name>
</gene>
<accession>Q9ZUH1</accession>
<protein>
    <recommendedName>
        <fullName>BTB/POZ domain-containing protein At2g24240</fullName>
    </recommendedName>
</protein>
<reference key="1">
    <citation type="journal article" date="1999" name="Nature">
        <title>Sequence and analysis of chromosome 2 of the plant Arabidopsis thaliana.</title>
        <authorList>
            <person name="Lin X."/>
            <person name="Kaul S."/>
            <person name="Rounsley S.D."/>
            <person name="Shea T.P."/>
            <person name="Benito M.-I."/>
            <person name="Town C.D."/>
            <person name="Fujii C.Y."/>
            <person name="Mason T.M."/>
            <person name="Bowman C.L."/>
            <person name="Barnstead M.E."/>
            <person name="Feldblyum T.V."/>
            <person name="Buell C.R."/>
            <person name="Ketchum K.A."/>
            <person name="Lee J.J."/>
            <person name="Ronning C.M."/>
            <person name="Koo H.L."/>
            <person name="Moffat K.S."/>
            <person name="Cronin L.A."/>
            <person name="Shen M."/>
            <person name="Pai G."/>
            <person name="Van Aken S."/>
            <person name="Umayam L."/>
            <person name="Tallon L.J."/>
            <person name="Gill J.E."/>
            <person name="Adams M.D."/>
            <person name="Carrera A.J."/>
            <person name="Creasy T.H."/>
            <person name="Goodman H.M."/>
            <person name="Somerville C.R."/>
            <person name="Copenhaver G.P."/>
            <person name="Preuss D."/>
            <person name="Nierman W.C."/>
            <person name="White O."/>
            <person name="Eisen J.A."/>
            <person name="Salzberg S.L."/>
            <person name="Fraser C.M."/>
            <person name="Venter J.C."/>
        </authorList>
    </citation>
    <scope>NUCLEOTIDE SEQUENCE [LARGE SCALE GENOMIC DNA]</scope>
    <source>
        <strain>cv. Columbia</strain>
    </source>
</reference>
<reference key="2">
    <citation type="journal article" date="2017" name="Plant J.">
        <title>Araport11: a complete reannotation of the Arabidopsis thaliana reference genome.</title>
        <authorList>
            <person name="Cheng C.Y."/>
            <person name="Krishnakumar V."/>
            <person name="Chan A.P."/>
            <person name="Thibaud-Nissen F."/>
            <person name="Schobel S."/>
            <person name="Town C.D."/>
        </authorList>
    </citation>
    <scope>GENOME REANNOTATION</scope>
    <source>
        <strain>cv. Columbia</strain>
    </source>
</reference>
<reference key="3">
    <citation type="submission" date="2004-12" db="EMBL/GenBank/DDBJ databases">
        <title>Arabidopsis ORF clones.</title>
        <authorList>
            <person name="Cheuk R.F."/>
            <person name="Chen H."/>
            <person name="Kim C.J."/>
            <person name="Shinn P."/>
            <person name="Ecker J.R."/>
        </authorList>
    </citation>
    <scope>NUCLEOTIDE SEQUENCE [LARGE SCALE MRNA]</scope>
    <source>
        <strain>cv. Columbia</strain>
    </source>
</reference>
<reference key="4">
    <citation type="submission" date="2006-07" db="EMBL/GenBank/DDBJ databases">
        <title>Large-scale analysis of RIKEN Arabidopsis full-length (RAFL) cDNAs.</title>
        <authorList>
            <person name="Totoki Y."/>
            <person name="Seki M."/>
            <person name="Ishida J."/>
            <person name="Nakajima M."/>
            <person name="Enju A."/>
            <person name="Kamiya A."/>
            <person name="Narusaka M."/>
            <person name="Shin-i T."/>
            <person name="Nakagawa M."/>
            <person name="Sakamoto N."/>
            <person name="Oishi K."/>
            <person name="Kohara Y."/>
            <person name="Kobayashi M."/>
            <person name="Toyoda A."/>
            <person name="Sakaki Y."/>
            <person name="Sakurai T."/>
            <person name="Iida K."/>
            <person name="Akiyama K."/>
            <person name="Satou M."/>
            <person name="Toyoda T."/>
            <person name="Konagaya A."/>
            <person name="Carninci P."/>
            <person name="Kawai J."/>
            <person name="Hayashizaki Y."/>
            <person name="Shinozaki K."/>
        </authorList>
    </citation>
    <scope>NUCLEOTIDE SEQUENCE [LARGE SCALE MRNA]</scope>
    <source>
        <strain>cv. Columbia</strain>
    </source>
</reference>
<reference key="5">
    <citation type="journal article" date="2005" name="J. Biol. Chem.">
        <title>Cullins 3a and 3b assemble with members of the broad complex/tramtrack/bric-a-brac (BTB) protein family to form essential ubiquitin-protein ligases (E3s) in Arabidopsis.</title>
        <authorList>
            <person name="Gingerich D.J."/>
            <person name="Gagne J.M."/>
            <person name="Salter D.W."/>
            <person name="Hellmann H."/>
            <person name="Estelle M."/>
            <person name="Ma L."/>
            <person name="Vierstra R.D."/>
        </authorList>
    </citation>
    <scope>DOMAIN BTB</scope>
</reference>